<dbReference type="EC" id="1.16.-.-" evidence="1"/>
<dbReference type="EMBL" id="AY195736">
    <property type="protein sequence ID" value="AAO41730.1"/>
    <property type="molecule type" value="Genomic_DNA"/>
</dbReference>
<dbReference type="SMR" id="Q84FI0"/>
<dbReference type="GO" id="GO:0005737">
    <property type="term" value="C:cytoplasm"/>
    <property type="evidence" value="ECO:0007669"/>
    <property type="project" value="UniProtKB-SubCell"/>
</dbReference>
<dbReference type="GO" id="GO:0003677">
    <property type="term" value="F:DNA binding"/>
    <property type="evidence" value="ECO:0007669"/>
    <property type="project" value="UniProtKB-UniRule"/>
</dbReference>
<dbReference type="GO" id="GO:0008199">
    <property type="term" value="F:ferric iron binding"/>
    <property type="evidence" value="ECO:0007669"/>
    <property type="project" value="UniProtKB-UniRule"/>
</dbReference>
<dbReference type="GO" id="GO:0016722">
    <property type="term" value="F:oxidoreductase activity, acting on metal ions"/>
    <property type="evidence" value="ECO:0007669"/>
    <property type="project" value="InterPro"/>
</dbReference>
<dbReference type="GO" id="GO:0030261">
    <property type="term" value="P:chromosome condensation"/>
    <property type="evidence" value="ECO:0007669"/>
    <property type="project" value="UniProtKB-KW"/>
</dbReference>
<dbReference type="GO" id="GO:0006879">
    <property type="term" value="P:intracellular iron ion homeostasis"/>
    <property type="evidence" value="ECO:0007669"/>
    <property type="project" value="UniProtKB-KW"/>
</dbReference>
<dbReference type="CDD" id="cd01043">
    <property type="entry name" value="DPS"/>
    <property type="match status" value="1"/>
</dbReference>
<dbReference type="FunFam" id="1.20.1260.10:FF:000003">
    <property type="entry name" value="DNA protection during starvation protein"/>
    <property type="match status" value="1"/>
</dbReference>
<dbReference type="Gene3D" id="1.20.1260.10">
    <property type="match status" value="1"/>
</dbReference>
<dbReference type="HAMAP" id="MF_01441">
    <property type="entry name" value="Dps"/>
    <property type="match status" value="1"/>
</dbReference>
<dbReference type="InterPro" id="IPR002177">
    <property type="entry name" value="DPS_DNA-bd"/>
</dbReference>
<dbReference type="InterPro" id="IPR023188">
    <property type="entry name" value="DPS_DNA-bd_CS"/>
</dbReference>
<dbReference type="InterPro" id="IPR023067">
    <property type="entry name" value="Dps_gammaproteobac"/>
</dbReference>
<dbReference type="InterPro" id="IPR012347">
    <property type="entry name" value="Ferritin-like"/>
</dbReference>
<dbReference type="InterPro" id="IPR009078">
    <property type="entry name" value="Ferritin-like_SF"/>
</dbReference>
<dbReference type="InterPro" id="IPR008331">
    <property type="entry name" value="Ferritin_DPS_dom"/>
</dbReference>
<dbReference type="NCBIfam" id="NF006975">
    <property type="entry name" value="PRK09448.1"/>
    <property type="match status" value="1"/>
</dbReference>
<dbReference type="PANTHER" id="PTHR42932:SF3">
    <property type="entry name" value="DNA PROTECTION DURING STARVATION PROTEIN"/>
    <property type="match status" value="1"/>
</dbReference>
<dbReference type="PANTHER" id="PTHR42932">
    <property type="entry name" value="GENERAL STRESS PROTEIN 20U"/>
    <property type="match status" value="1"/>
</dbReference>
<dbReference type="Pfam" id="PF00210">
    <property type="entry name" value="Ferritin"/>
    <property type="match status" value="1"/>
</dbReference>
<dbReference type="PIRSF" id="PIRSF005900">
    <property type="entry name" value="Dps"/>
    <property type="match status" value="1"/>
</dbReference>
<dbReference type="PRINTS" id="PR01346">
    <property type="entry name" value="HELNAPAPROT"/>
</dbReference>
<dbReference type="SUPFAM" id="SSF47240">
    <property type="entry name" value="Ferritin-like"/>
    <property type="match status" value="1"/>
</dbReference>
<dbReference type="PROSITE" id="PS00818">
    <property type="entry name" value="DPS_1"/>
    <property type="match status" value="1"/>
</dbReference>
<dbReference type="PROSITE" id="PS00819">
    <property type="entry name" value="DPS_2"/>
    <property type="match status" value="1"/>
</dbReference>
<feature type="chain" id="PRO_0000271586" description="DNA protection during starvation protein">
    <location>
        <begin position="1"/>
        <end position="167"/>
    </location>
</feature>
<feature type="binding site" evidence="1">
    <location>
        <position position="51"/>
    </location>
    <ligand>
        <name>Fe cation</name>
        <dbReference type="ChEBI" id="CHEBI:24875"/>
    </ligand>
</feature>
<feature type="binding site" evidence="1">
    <location>
        <position position="78"/>
    </location>
    <ligand>
        <name>Fe cation</name>
        <dbReference type="ChEBI" id="CHEBI:24875"/>
    </ligand>
</feature>
<feature type="binding site" evidence="1">
    <location>
        <position position="82"/>
    </location>
    <ligand>
        <name>Fe cation</name>
        <dbReference type="ChEBI" id="CHEBI:24875"/>
    </ligand>
</feature>
<reference key="1">
    <citation type="journal article" date="2004" name="Appl. Environ. Microbiol.">
        <title>Culture-independent analysis of fecal enterobacteria in environmental samples by single-cell mRNA profiling.</title>
        <authorList>
            <person name="Chen H."/>
            <person name="Ponniah G."/>
            <person name="Salonen N."/>
            <person name="Blum P."/>
        </authorList>
    </citation>
    <scope>NUCLEOTIDE SEQUENCE [GENOMIC DNA]</scope>
    <source>
        <strain>ATCC 33495 / C122</strain>
    </source>
</reference>
<keyword id="KW-0963">Cytoplasm</keyword>
<keyword id="KW-0226">DNA condensation</keyword>
<keyword id="KW-0238">DNA-binding</keyword>
<keyword id="KW-0408">Iron</keyword>
<keyword id="KW-0409">Iron storage</keyword>
<keyword id="KW-0479">Metal-binding</keyword>
<keyword id="KW-0560">Oxidoreductase</keyword>
<accession>Q84FI0</accession>
<protein>
    <recommendedName>
        <fullName evidence="1">DNA protection during starvation protein</fullName>
        <ecNumber evidence="1">1.16.-.-</ecNumber>
    </recommendedName>
</protein>
<name>DPS_KLEPN</name>
<gene>
    <name evidence="1" type="primary">dps</name>
</gene>
<organism>
    <name type="scientific">Klebsiella pneumoniae</name>
    <dbReference type="NCBI Taxonomy" id="573"/>
    <lineage>
        <taxon>Bacteria</taxon>
        <taxon>Pseudomonadati</taxon>
        <taxon>Pseudomonadota</taxon>
        <taxon>Gammaproteobacteria</taxon>
        <taxon>Enterobacterales</taxon>
        <taxon>Enterobacteriaceae</taxon>
        <taxon>Klebsiella/Raoultella group</taxon>
        <taxon>Klebsiella</taxon>
        <taxon>Klebsiella pneumoniae complex</taxon>
    </lineage>
</organism>
<proteinExistence type="inferred from homology"/>
<sequence length="167" mass="18752">MSTAKLVKSKATNLLYTRNDVADSEKKATIELLNRQVIQFIDLSLITKQAHWNMRGANFIAVHEMLDGFRTALTEHLDTMAERAVQLGGVALGTTQVINSKTPLQSYPLDIHHVQDHLKALADRYAVVANDVRKAIDEAKDEDTADIFTAASRDLDKFLWFIESNIE</sequence>
<evidence type="ECO:0000255" key="1">
    <source>
        <dbReference type="HAMAP-Rule" id="MF_01441"/>
    </source>
</evidence>
<comment type="function">
    <text evidence="1">During stationary phase, binds the chromosome non-specifically, forming a highly ordered and stable dps-DNA co-crystal within which chromosomal DNA is condensed and protected from diverse damages. It protects DNA from oxidative damage by sequestering intracellular Fe(2+) ion and storing it in the form of Fe(3+) oxyhydroxide mineral, which can be released after reduction. One hydrogen peroxide oxidizes two Fe(2+) ions, which prevents hydroxyl radical production by the Fenton reaction.</text>
</comment>
<comment type="catalytic activity">
    <reaction evidence="1">
        <text>2 Fe(2+) + H2O2 + 2 H(+) = 2 Fe(3+) + 2 H2O</text>
        <dbReference type="Rhea" id="RHEA:48712"/>
        <dbReference type="ChEBI" id="CHEBI:15377"/>
        <dbReference type="ChEBI" id="CHEBI:15378"/>
        <dbReference type="ChEBI" id="CHEBI:16240"/>
        <dbReference type="ChEBI" id="CHEBI:29033"/>
        <dbReference type="ChEBI" id="CHEBI:29034"/>
    </reaction>
</comment>
<comment type="subunit">
    <text evidence="1">Homododecamer. The 12 subunits form a hollow sphere into which the mineral iron core of up to 500 Fe(3+) can be deposited.</text>
</comment>
<comment type="subcellular location">
    <subcellularLocation>
        <location evidence="1">Cytoplasm</location>
    </subcellularLocation>
</comment>
<comment type="similarity">
    <text evidence="1">Belongs to the Dps family.</text>
</comment>